<proteinExistence type="evidence at protein level"/>
<sequence length="301" mass="32218">MAVMTPRRERSSLLSRALQVTAAAATALVTAVSLAAPAHAANPYERGPNPTDALLEASSGPFSVSEENVSRLSASGFGGGTIYYPRENNTYGAVAISPGYTGTEASIAWLGERIASHGFVVITIDTITTLDQPDSRAEQLNAALNHMINRASSTVRSRIDSSRLAVMGHSMGGGGTLRLASQRPDLKAAIPLTPWHLNKNWSSVTVPTLIIGADLDTIAPVATHAKPFYNSLPSSISKAYLELDGATHFAPNIPNKIIGKYSVAWLKRFVDNDTRYTQFLCPGPRDGLFGEVEEYRSTCPF</sequence>
<protein>
    <recommendedName>
        <fullName>Cutinase</fullName>
        <ecNumber evidence="4 5">3.1.1.74</ecNumber>
    </recommendedName>
    <alternativeName>
        <fullName evidence="12">Poly(ethylene terephthalate) hydrolase</fullName>
        <shortName evidence="12">PET hydrolase</shortName>
        <shortName evidence="12">PETase</shortName>
        <ecNumber evidence="7 9">3.1.1.101</ecNumber>
    </alternativeName>
</protein>
<dbReference type="EC" id="3.1.1.74" evidence="4 5"/>
<dbReference type="EC" id="3.1.1.101" evidence="7 9"/>
<dbReference type="EMBL" id="CP000088">
    <property type="protein sequence ID" value="AAZ54921.1"/>
    <property type="molecule type" value="Genomic_DNA"/>
</dbReference>
<dbReference type="RefSeq" id="WP_011291330.1">
    <property type="nucleotide sequence ID" value="NC_007333.1"/>
</dbReference>
<dbReference type="SMR" id="Q47RJ6"/>
<dbReference type="STRING" id="269800.Tfu_0883"/>
<dbReference type="ESTHER" id="thefu-q6a0i4">
    <property type="family name" value="Polyesterase-lipase-cutinase"/>
</dbReference>
<dbReference type="KEGG" id="tfu:Tfu_0883"/>
<dbReference type="eggNOG" id="COG4188">
    <property type="taxonomic scope" value="Bacteria"/>
</dbReference>
<dbReference type="HOGENOM" id="CLU_052605_1_0_11"/>
<dbReference type="OrthoDB" id="1466228at2"/>
<dbReference type="BRENDA" id="3.1.1.3">
    <property type="organism ID" value="6298"/>
</dbReference>
<dbReference type="BRENDA" id="3.1.1.74">
    <property type="organism ID" value="6298"/>
</dbReference>
<dbReference type="SABIO-RK" id="Q47RJ6"/>
<dbReference type="GO" id="GO:0005576">
    <property type="term" value="C:extracellular region"/>
    <property type="evidence" value="ECO:0007669"/>
    <property type="project" value="UniProtKB-SubCell"/>
</dbReference>
<dbReference type="GO" id="GO:0042597">
    <property type="term" value="C:periplasmic space"/>
    <property type="evidence" value="ECO:0007669"/>
    <property type="project" value="UniProtKB-SubCell"/>
</dbReference>
<dbReference type="GO" id="GO:0050525">
    <property type="term" value="F:cutinase activity"/>
    <property type="evidence" value="ECO:0000314"/>
    <property type="project" value="UniProtKB"/>
</dbReference>
<dbReference type="GO" id="GO:0004806">
    <property type="term" value="F:triacylglycerol lipase activity"/>
    <property type="evidence" value="ECO:0007669"/>
    <property type="project" value="UniProtKB-EC"/>
</dbReference>
<dbReference type="Gene3D" id="3.40.50.1820">
    <property type="entry name" value="alpha/beta hydrolase"/>
    <property type="match status" value="1"/>
</dbReference>
<dbReference type="InterPro" id="IPR029058">
    <property type="entry name" value="AB_hydrolase_fold"/>
</dbReference>
<dbReference type="InterPro" id="IPR050261">
    <property type="entry name" value="FrsA_esterase"/>
</dbReference>
<dbReference type="InterPro" id="IPR041127">
    <property type="entry name" value="PET_hydrolase/cutinase-like"/>
</dbReference>
<dbReference type="PANTHER" id="PTHR22946">
    <property type="entry name" value="DIENELACTONE HYDROLASE DOMAIN-CONTAINING PROTEIN-RELATED"/>
    <property type="match status" value="1"/>
</dbReference>
<dbReference type="PANTHER" id="PTHR22946:SF9">
    <property type="entry name" value="POLYKETIDE TRANSFERASE AF380"/>
    <property type="match status" value="1"/>
</dbReference>
<dbReference type="Pfam" id="PF12740">
    <property type="entry name" value="PETase"/>
    <property type="match status" value="1"/>
</dbReference>
<dbReference type="SUPFAM" id="SSF53474">
    <property type="entry name" value="alpha/beta-Hydrolases"/>
    <property type="match status" value="1"/>
</dbReference>
<evidence type="ECO:0000250" key="1">
    <source>
        <dbReference type="UniProtKB" id="A0A0K8P6T7"/>
    </source>
</evidence>
<evidence type="ECO:0000250" key="2">
    <source>
        <dbReference type="UniProtKB" id="G8GER6"/>
    </source>
</evidence>
<evidence type="ECO:0000255" key="3"/>
<evidence type="ECO:0000269" key="4">
    <source>
    </source>
</evidence>
<evidence type="ECO:0000269" key="5">
    <source>
    </source>
</evidence>
<evidence type="ECO:0000269" key="6">
    <source>
    </source>
</evidence>
<evidence type="ECO:0000269" key="7">
    <source>
    </source>
</evidence>
<evidence type="ECO:0000269" key="8">
    <source>
    </source>
</evidence>
<evidence type="ECO:0000269" key="9">
    <source>
    </source>
</evidence>
<evidence type="ECO:0000269" key="10">
    <source>
    </source>
</evidence>
<evidence type="ECO:0000303" key="11">
    <source>
    </source>
</evidence>
<evidence type="ECO:0000305" key="12"/>
<evidence type="ECO:0000305" key="13">
    <source>
    </source>
</evidence>
<evidence type="ECO:0000305" key="14">
    <source>
    </source>
</evidence>
<evidence type="ECO:0000312" key="15">
    <source>
        <dbReference type="EMBL" id="AAZ54921.1"/>
    </source>
</evidence>
<feature type="signal peptide" evidence="13">
    <location>
        <begin position="1"/>
        <end position="40"/>
    </location>
</feature>
<feature type="chain" id="PRO_5004233794" description="Cutinase" evidence="3">
    <location>
        <begin position="41"/>
        <end position="301"/>
    </location>
</feature>
<feature type="active site" description="Nucleophile" evidence="13">
    <location>
        <position position="170"/>
    </location>
</feature>
<feature type="active site" description="Charge relay system" evidence="1">
    <location>
        <position position="216"/>
    </location>
</feature>
<feature type="active site" description="Charge relay system" evidence="1">
    <location>
        <position position="248"/>
    </location>
</feature>
<feature type="binding site" evidence="1">
    <location>
        <position position="100"/>
    </location>
    <ligand>
        <name>poly(ethylene terephthalate)</name>
        <dbReference type="ChEBI" id="CHEBI:131701"/>
    </ligand>
</feature>
<feature type="binding site" evidence="1">
    <location>
        <position position="171"/>
    </location>
    <ligand>
        <name>poly(ethylene terephthalate)</name>
        <dbReference type="ChEBI" id="CHEBI:131701"/>
    </ligand>
</feature>
<feature type="binding site" evidence="1">
    <location>
        <position position="195"/>
    </location>
    <ligand>
        <name>poly(ethylene terephthalate)</name>
        <dbReference type="ChEBI" id="CHEBI:131701"/>
    </ligand>
</feature>
<feature type="disulfide bond" evidence="1">
    <location>
        <begin position="281"/>
        <end position="299"/>
    </location>
</feature>
<feature type="mutagenesis site" description="Increases activity on poly(ethylene terephthalate) (PET), pNP-butyrate and triolein; when associated with A-132." evidence="7">
    <original>T</original>
    <variation>A</variation>
    <location>
        <position position="101"/>
    </location>
</feature>
<feature type="mutagenesis site" description="Increases activity on poly(ethylene terephthalate) (PET), pNP-butyrate and triolein; when associated with A-101." evidence="7">
    <original>Q</original>
    <variation>A</variation>
    <location>
        <position position="132"/>
    </location>
</feature>
<feature type="mutagenesis site" description="Abolishes activity." evidence="8">
    <original>S</original>
    <variation>A</variation>
    <location>
        <position position="170"/>
    </location>
</feature>
<feature type="mutagenesis site" description="Increases activity on poly(ethylene terephthalate) (PET), pNP-butyrate and triolein." evidence="7">
    <original>I</original>
    <variation>A</variation>
    <location>
        <position position="218"/>
    </location>
</feature>
<keyword id="KW-1015">Disulfide bond</keyword>
<keyword id="KW-0378">Hydrolase</keyword>
<keyword id="KW-0574">Periplasm</keyword>
<keyword id="KW-0964">Secreted</keyword>
<keyword id="KW-0719">Serine esterase</keyword>
<keyword id="KW-0732">Signal</keyword>
<accession>Q47RJ6</accession>
<comment type="function">
    <text evidence="4 5 6 7 8 9 14">Catalyzes the hydrolysis of cutin, a polyester that forms the structure of plant cuticle (PubMed:18658138, PubMed:20729325). Shows esterase activity towards p-nitrophenol-linked aliphatic esters (pNP-aliphatic esters) (PubMed:18658138, PubMed:20729325, PubMed:21594592, PubMed:21751386, PubMed:23603671, PubMed:25545638). Also hydrolyzes the triglyceride triolein (Probable) (PubMed:18658138, PubMed:20729325, PubMed:21751386). Capable of degrading the plastic poly(ethylene terephthalate) (PET), the most abundant polyester plastic in the world (PubMed:21751386, PubMed:25545638).</text>
</comment>
<comment type="catalytic activity">
    <reaction evidence="4 5 6 7 8 9">
        <text>a butanoate ester + H2O = an aliphatic alcohol + butanoate + H(+)</text>
        <dbReference type="Rhea" id="RHEA:47348"/>
        <dbReference type="ChEBI" id="CHEBI:2571"/>
        <dbReference type="ChEBI" id="CHEBI:15377"/>
        <dbReference type="ChEBI" id="CHEBI:15378"/>
        <dbReference type="ChEBI" id="CHEBI:17968"/>
        <dbReference type="ChEBI" id="CHEBI:50477"/>
    </reaction>
    <physiologicalReaction direction="left-to-right" evidence="4 5 7 9">
        <dbReference type="Rhea" id="RHEA:47349"/>
    </physiologicalReaction>
</comment>
<comment type="catalytic activity">
    <reaction evidence="7 9">
        <text>(ethylene terephthalate)(n) + H2O = (ethylene terephthalate)(n-1) + 4-[(2-hydroxyethoxy)carbonyl]benzoate + H(+)</text>
        <dbReference type="Rhea" id="RHEA:49528"/>
        <dbReference type="Rhea" id="RHEA-COMP:12420"/>
        <dbReference type="Rhea" id="RHEA-COMP:12421"/>
        <dbReference type="ChEBI" id="CHEBI:15377"/>
        <dbReference type="ChEBI" id="CHEBI:15378"/>
        <dbReference type="ChEBI" id="CHEBI:131701"/>
        <dbReference type="ChEBI" id="CHEBI:131704"/>
        <dbReference type="EC" id="3.1.1.101"/>
    </reaction>
    <physiologicalReaction direction="left-to-right" evidence="7 9">
        <dbReference type="Rhea" id="RHEA:49529"/>
    </physiologicalReaction>
</comment>
<comment type="catalytic activity">
    <reaction evidence="4 5">
        <text>cutin + H2O = cutin monomers.</text>
        <dbReference type="EC" id="3.1.1.74"/>
    </reaction>
</comment>
<comment type="activity regulation">
    <text evidence="4 9">Activated by magnesium ions (PubMed:25545638). Activated by calcium ions (PubMed:25545638). Inhibited by the serine hydrolase inhibitor phenylmethanesulfonyl fluoride (PMSF) (PubMed:18658138).</text>
</comment>
<comment type="biophysicochemical properties">
    <kinetics>
        <KM evidence="5">640 uM for pNP-butanoate</KM>
        <KM evidence="8">312 uM for pNP-butanoate (at 20 degrees Celsius and pH 8)</KM>
        <text evidence="5 8">kcat is 220 sec(-1) with pNP-butanoate as substrate (PubMed:20729325). kcat is 304 sec(-1) with pNP-butanoate as substrate (at 20 degrees Celsius and pH 8) (PubMed:23603671).</text>
    </kinetics>
    <phDependence>
        <text evidence="4 5 8">Optimum pH is 8.</text>
    </phDependence>
    <temperatureDependence>
        <text evidence="4 5 8">Optimum temperature is 60 degrees Celsius.</text>
    </temperatureDependence>
</comment>
<comment type="subcellular location">
    <subcellularLocation>
        <location evidence="2">Secreted</location>
    </subcellularLocation>
    <subcellularLocation>
        <location evidence="2">Periplasm</location>
    </subcellularLocation>
</comment>
<comment type="biotechnology">
    <text evidence="4 5 7 9 10">May have promising applications in chemical and textile industries as it is capable of hydrolyzing a variety of substrates including soluble esters and insoluble triglycerides (PubMed:18658138, PubMed:20729325). Can hydrolyze and thus modulate the surface properties of natural fibers such as cotton (PubMed:20729325). Has potential for application in biological recycling of plastic waste products (PubMed:21751386, PubMed:25545638). As the hydrolysis reaction is reversible, may also have applications in the food industry for synthesizing short-chain aliphatic esters, odor chemicals used as food flavorings (PubMed:27041308).</text>
</comment>
<comment type="similarity">
    <text evidence="12">Belongs to the AB hydrolase superfamily.</text>
</comment>
<gene>
    <name evidence="11" type="primary">TfH</name>
    <name evidence="15" type="ordered locus">Tfu_0883</name>
</gene>
<reference key="1">
    <citation type="journal article" date="2007" name="J. Bacteriol.">
        <title>Genome sequence and analysis of the soil cellulolytic actinomycete Thermobifida fusca YX.</title>
        <authorList>
            <person name="Lykidis A."/>
            <person name="Mavromatis K."/>
            <person name="Ivanova N."/>
            <person name="Anderson I."/>
            <person name="Land M."/>
            <person name="DiBartolo G."/>
            <person name="Martinez M."/>
            <person name="Lapidus A."/>
            <person name="Lucas S."/>
            <person name="Copeland A."/>
            <person name="Richardson P."/>
            <person name="Wilson D.B."/>
            <person name="Kyrpides N."/>
        </authorList>
    </citation>
    <scope>NUCLEOTIDE SEQUENCE [LARGE SCALE GENOMIC DNA]</scope>
    <source>
        <strain>YX</strain>
    </source>
</reference>
<reference evidence="12" key="2">
    <citation type="journal article" date="2008" name="J. Biol. Chem.">
        <title>Identification and characterization of bacterial cutinase.</title>
        <authorList>
            <person name="Chen S."/>
            <person name="Tong X."/>
            <person name="Woodard R.W."/>
            <person name="Du G."/>
            <person name="Wu J."/>
            <person name="Chen J."/>
        </authorList>
    </citation>
    <scope>FUNCTION</scope>
    <scope>CATALYTIC ACTIVITY</scope>
    <scope>ACTIVITY REGULATION</scope>
    <scope>BIOPHYSICOCHEMICAL PROPERTIES</scope>
    <scope>BIOTECHNOLOGY</scope>
</reference>
<reference evidence="12" key="3">
    <citation type="journal article" date="2010" name="Appl. Environ. Microbiol.">
        <title>Characterization of Thermobifida fusca cutinase-carbohydrate-binding module fusion proteins and their potential application in bioscouring.</title>
        <authorList>
            <person name="Zhang Y."/>
            <person name="Chen S."/>
            <person name="Xu M."/>
            <person name="Cavaco-Paulo A."/>
            <person name="Cavoco-Paulo A."/>
            <person name="Wu J."/>
            <person name="Chen J."/>
        </authorList>
    </citation>
    <scope>FUNCTION</scope>
    <scope>CATALYTIC ACTIVITY</scope>
    <scope>BIOPHYSICOCHEMICAL PROPERTIES</scope>
    <scope>BIOTECHNOLOGY</scope>
</reference>
<reference evidence="12" key="4">
    <citation type="journal article" date="2011" name="Appl. Biochem. Biotechnol.">
        <title>Study on improvement of extracellular production of recombinant Thermobifida fusca cutinase by Escherichia coli.</title>
        <authorList>
            <person name="Chen S."/>
            <person name="Liu Z."/>
            <person name="Chen J."/>
            <person name="Wu J."/>
        </authorList>
    </citation>
    <scope>FUNCTION</scope>
    <scope>CATALYTIC ACTIVITY</scope>
</reference>
<reference evidence="12" key="5">
    <citation type="journal article" date="2011" name="Biotechnol. J.">
        <title>Engineered Thermobifida fusca cutinase with increased activity on polyester substrates.</title>
        <authorList>
            <person name="Silva C."/>
            <person name="Da S."/>
            <person name="Silva N."/>
            <person name="Matama T."/>
            <person name="Araujo R."/>
            <person name="Martins M."/>
            <person name="Chen S."/>
            <person name="Chen J."/>
            <person name="Wu J."/>
            <person name="Casal M."/>
            <person name="Cavaco-Paulo A."/>
        </authorList>
    </citation>
    <scope>FUNCTION</scope>
    <scope>CATALYTIC ACTIVITY</scope>
    <scope>BIOTECHNOLOGY</scope>
    <scope>MUTAGENESIS OF THR-101; GLN-132 AND ILE-218</scope>
</reference>
<reference evidence="12" key="6">
    <citation type="journal article" date="2013" name="Appl. Environ. Microbiol.">
        <title>Extracellular location of Thermobifida fusca cutinase expressed in Escherichia coli BL21(DE3) without mediation of a signal peptide.</title>
        <authorList>
            <person name="Su L."/>
            <person name="Woodard R.W."/>
            <person name="Chen J."/>
            <person name="Wu J."/>
        </authorList>
    </citation>
    <scope>FUNCTION</scope>
    <scope>CATALYTIC ACTIVITY</scope>
    <scope>BIOPHYSICOCHEMICAL PROPERTIES</scope>
    <scope>MUTAGENESIS OF SER-170</scope>
</reference>
<reference evidence="12" key="7">
    <citation type="journal article" date="2015" name="Biotechnol. J.">
        <title>Ca2+ and Mg2+ binding site engineering increases the degradation of polyethylene terephthalate films by polyester hydrolases from Thermobifida fusca.</title>
        <authorList>
            <person name="Then J."/>
            <person name="Wei R."/>
            <person name="Oeser T."/>
            <person name="Barth M."/>
            <person name="Belisario-Ferrari M.R."/>
            <person name="Schmidt J."/>
            <person name="Zimmermann W."/>
        </authorList>
    </citation>
    <scope>FUNCTION</scope>
    <scope>CATALYTIC ACTIVITY</scope>
    <scope>ACTIVITY REGULATION</scope>
    <scope>BIOTECHNOLOGY</scope>
</reference>
<reference evidence="12" key="8">
    <citation type="journal article" date="2016" name="Food Chem.">
        <title>Short-chain aliphatic ester synthesis using Thermobifida fusca cutinase.</title>
        <authorList>
            <person name="Su L."/>
            <person name="Hong R."/>
            <person name="Guo X."/>
            <person name="Wu J."/>
            <person name="Xia Y."/>
        </authorList>
    </citation>
    <scope>BIOTECHNOLOGY</scope>
</reference>
<name>PETH2_THEFY</name>
<organism>
    <name type="scientific">Thermobifida fusca (strain YX)</name>
    <dbReference type="NCBI Taxonomy" id="269800"/>
    <lineage>
        <taxon>Bacteria</taxon>
        <taxon>Bacillati</taxon>
        <taxon>Actinomycetota</taxon>
        <taxon>Actinomycetes</taxon>
        <taxon>Streptosporangiales</taxon>
        <taxon>Nocardiopsidaceae</taxon>
        <taxon>Thermobifida</taxon>
    </lineage>
</organism>